<reference key="1">
    <citation type="journal article" date="2001" name="Proc. Natl. Acad. Sci. U.S.A.">
        <title>Analysis of the chromosome sequence of the legume symbiont Sinorhizobium meliloti strain 1021.</title>
        <authorList>
            <person name="Capela D."/>
            <person name="Barloy-Hubler F."/>
            <person name="Gouzy J."/>
            <person name="Bothe G."/>
            <person name="Ampe F."/>
            <person name="Batut J."/>
            <person name="Boistard P."/>
            <person name="Becker A."/>
            <person name="Boutry M."/>
            <person name="Cadieu E."/>
            <person name="Dreano S."/>
            <person name="Gloux S."/>
            <person name="Godrie T."/>
            <person name="Goffeau A."/>
            <person name="Kahn D."/>
            <person name="Kiss E."/>
            <person name="Lelaure V."/>
            <person name="Masuy D."/>
            <person name="Pohl T."/>
            <person name="Portetelle D."/>
            <person name="Puehler A."/>
            <person name="Purnelle B."/>
            <person name="Ramsperger U."/>
            <person name="Renard C."/>
            <person name="Thebault P."/>
            <person name="Vandenbol M."/>
            <person name="Weidner S."/>
            <person name="Galibert F."/>
        </authorList>
    </citation>
    <scope>NUCLEOTIDE SEQUENCE [LARGE SCALE GENOMIC DNA]</scope>
    <source>
        <strain>1021</strain>
    </source>
</reference>
<reference key="2">
    <citation type="journal article" date="2001" name="Science">
        <title>The composite genome of the legume symbiont Sinorhizobium meliloti.</title>
        <authorList>
            <person name="Galibert F."/>
            <person name="Finan T.M."/>
            <person name="Long S.R."/>
            <person name="Puehler A."/>
            <person name="Abola P."/>
            <person name="Ampe F."/>
            <person name="Barloy-Hubler F."/>
            <person name="Barnett M.J."/>
            <person name="Becker A."/>
            <person name="Boistard P."/>
            <person name="Bothe G."/>
            <person name="Boutry M."/>
            <person name="Bowser L."/>
            <person name="Buhrmester J."/>
            <person name="Cadieu E."/>
            <person name="Capela D."/>
            <person name="Chain P."/>
            <person name="Cowie A."/>
            <person name="Davis R.W."/>
            <person name="Dreano S."/>
            <person name="Federspiel N.A."/>
            <person name="Fisher R.F."/>
            <person name="Gloux S."/>
            <person name="Godrie T."/>
            <person name="Goffeau A."/>
            <person name="Golding B."/>
            <person name="Gouzy J."/>
            <person name="Gurjal M."/>
            <person name="Hernandez-Lucas I."/>
            <person name="Hong A."/>
            <person name="Huizar L."/>
            <person name="Hyman R.W."/>
            <person name="Jones T."/>
            <person name="Kahn D."/>
            <person name="Kahn M.L."/>
            <person name="Kalman S."/>
            <person name="Keating D.H."/>
            <person name="Kiss E."/>
            <person name="Komp C."/>
            <person name="Lelaure V."/>
            <person name="Masuy D."/>
            <person name="Palm C."/>
            <person name="Peck M.C."/>
            <person name="Pohl T.M."/>
            <person name="Portetelle D."/>
            <person name="Purnelle B."/>
            <person name="Ramsperger U."/>
            <person name="Surzycki R."/>
            <person name="Thebault P."/>
            <person name="Vandenbol M."/>
            <person name="Vorhoelter F.J."/>
            <person name="Weidner S."/>
            <person name="Wells D.H."/>
            <person name="Wong K."/>
            <person name="Yeh K.-C."/>
            <person name="Batut J."/>
        </authorList>
    </citation>
    <scope>NUCLEOTIDE SEQUENCE [LARGE SCALE GENOMIC DNA]</scope>
    <source>
        <strain>1021</strain>
    </source>
</reference>
<name>KDSB_RHIME</name>
<sequence>MNREQSGKTLVLIPARMASTRLPGKPLADICGLPMIVQVARRAAEAEVGRIVVAVDHPDVFAAVTGAGFEAIMTRVDHQSGSDRIHEALLKADPHGEAEIVINVQGDLPTIEPGPIRAALKPLENPATDIATLTVAITDEHEKTNPNVVKVVGSPLSDSRFRALYFTRATAPYGEGPLYHHIGLYAYRRKALETFVSLKPSTLEKRESLEQLRALEAGMRIDVEVVDSVPLGVDTPADLDKARRILSARV</sequence>
<organism>
    <name type="scientific">Rhizobium meliloti (strain 1021)</name>
    <name type="common">Ensifer meliloti</name>
    <name type="synonym">Sinorhizobium meliloti</name>
    <dbReference type="NCBI Taxonomy" id="266834"/>
    <lineage>
        <taxon>Bacteria</taxon>
        <taxon>Pseudomonadati</taxon>
        <taxon>Pseudomonadota</taxon>
        <taxon>Alphaproteobacteria</taxon>
        <taxon>Hyphomicrobiales</taxon>
        <taxon>Rhizobiaceae</taxon>
        <taxon>Sinorhizobium/Ensifer group</taxon>
        <taxon>Sinorhizobium</taxon>
    </lineage>
</organism>
<dbReference type="EC" id="2.7.7.38" evidence="1"/>
<dbReference type="EMBL" id="AL591688">
    <property type="protein sequence ID" value="CAC41610.1"/>
    <property type="molecule type" value="Genomic_DNA"/>
</dbReference>
<dbReference type="RefSeq" id="NP_384329.1">
    <property type="nucleotide sequence ID" value="NC_003047.1"/>
</dbReference>
<dbReference type="RefSeq" id="WP_010968437.1">
    <property type="nucleotide sequence ID" value="NC_003047.1"/>
</dbReference>
<dbReference type="SMR" id="Q92SX6"/>
<dbReference type="EnsemblBacteria" id="CAC41610">
    <property type="protein sequence ID" value="CAC41610"/>
    <property type="gene ID" value="SMc02898"/>
</dbReference>
<dbReference type="KEGG" id="sme:SMc02898"/>
<dbReference type="PATRIC" id="fig|266834.11.peg.1589"/>
<dbReference type="eggNOG" id="COG1212">
    <property type="taxonomic scope" value="Bacteria"/>
</dbReference>
<dbReference type="HOGENOM" id="CLU_065038_0_1_5"/>
<dbReference type="OrthoDB" id="9815559at2"/>
<dbReference type="BRENDA" id="2.7.7.38">
    <property type="organism ID" value="5347"/>
</dbReference>
<dbReference type="UniPathway" id="UPA00030"/>
<dbReference type="UniPathway" id="UPA00358">
    <property type="reaction ID" value="UER00476"/>
</dbReference>
<dbReference type="Proteomes" id="UP000001976">
    <property type="component" value="Chromosome"/>
</dbReference>
<dbReference type="GO" id="GO:0005829">
    <property type="term" value="C:cytosol"/>
    <property type="evidence" value="ECO:0007669"/>
    <property type="project" value="TreeGrafter"/>
</dbReference>
<dbReference type="GO" id="GO:0008690">
    <property type="term" value="F:3-deoxy-manno-octulosonate cytidylyltransferase activity"/>
    <property type="evidence" value="ECO:0007669"/>
    <property type="project" value="UniProtKB-UniRule"/>
</dbReference>
<dbReference type="GO" id="GO:0033468">
    <property type="term" value="P:CMP-keto-3-deoxy-D-manno-octulosonic acid biosynthetic process"/>
    <property type="evidence" value="ECO:0007669"/>
    <property type="project" value="UniProtKB-UniRule"/>
</dbReference>
<dbReference type="GO" id="GO:0009103">
    <property type="term" value="P:lipopolysaccharide biosynthetic process"/>
    <property type="evidence" value="ECO:0007669"/>
    <property type="project" value="UniProtKB-UniRule"/>
</dbReference>
<dbReference type="CDD" id="cd02517">
    <property type="entry name" value="CMP-KDO-Synthetase"/>
    <property type="match status" value="1"/>
</dbReference>
<dbReference type="Gene3D" id="3.90.550.10">
    <property type="entry name" value="Spore Coat Polysaccharide Biosynthesis Protein SpsA, Chain A"/>
    <property type="match status" value="1"/>
</dbReference>
<dbReference type="HAMAP" id="MF_00057">
    <property type="entry name" value="KdsB"/>
    <property type="match status" value="1"/>
</dbReference>
<dbReference type="InterPro" id="IPR003329">
    <property type="entry name" value="Cytidylyl_trans"/>
</dbReference>
<dbReference type="InterPro" id="IPR004528">
    <property type="entry name" value="KdsB"/>
</dbReference>
<dbReference type="InterPro" id="IPR029044">
    <property type="entry name" value="Nucleotide-diphossugar_trans"/>
</dbReference>
<dbReference type="NCBIfam" id="TIGR00466">
    <property type="entry name" value="kdsB"/>
    <property type="match status" value="1"/>
</dbReference>
<dbReference type="NCBIfam" id="NF003948">
    <property type="entry name" value="PRK05450.1-1"/>
    <property type="match status" value="1"/>
</dbReference>
<dbReference type="NCBIfam" id="NF003952">
    <property type="entry name" value="PRK05450.1-5"/>
    <property type="match status" value="1"/>
</dbReference>
<dbReference type="PANTHER" id="PTHR42866">
    <property type="entry name" value="3-DEOXY-MANNO-OCTULOSONATE CYTIDYLYLTRANSFERASE"/>
    <property type="match status" value="1"/>
</dbReference>
<dbReference type="PANTHER" id="PTHR42866:SF2">
    <property type="entry name" value="3-DEOXY-MANNO-OCTULOSONATE CYTIDYLYLTRANSFERASE, MITOCHONDRIAL"/>
    <property type="match status" value="1"/>
</dbReference>
<dbReference type="Pfam" id="PF02348">
    <property type="entry name" value="CTP_transf_3"/>
    <property type="match status" value="1"/>
</dbReference>
<dbReference type="SUPFAM" id="SSF53448">
    <property type="entry name" value="Nucleotide-diphospho-sugar transferases"/>
    <property type="match status" value="1"/>
</dbReference>
<gene>
    <name evidence="1" type="primary">kdsB</name>
    <name type="ordered locus">R00223</name>
    <name type="ORF">SMc02898</name>
</gene>
<protein>
    <recommendedName>
        <fullName evidence="1">3-deoxy-manno-octulosonate cytidylyltransferase</fullName>
        <ecNumber evidence="1">2.7.7.38</ecNumber>
    </recommendedName>
    <alternativeName>
        <fullName evidence="1">CMP-2-keto-3-deoxyoctulosonic acid synthase</fullName>
        <shortName evidence="1">CKS</shortName>
        <shortName evidence="1">CMP-KDO synthase</shortName>
    </alternativeName>
</protein>
<feature type="chain" id="PRO_0000370133" description="3-deoxy-manno-octulosonate cytidylyltransferase">
    <location>
        <begin position="1"/>
        <end position="250"/>
    </location>
</feature>
<evidence type="ECO:0000255" key="1">
    <source>
        <dbReference type="HAMAP-Rule" id="MF_00057"/>
    </source>
</evidence>
<comment type="function">
    <text evidence="1">Activates KDO (a required 8-carbon sugar) for incorporation into bacterial lipopolysaccharide in Gram-negative bacteria.</text>
</comment>
<comment type="catalytic activity">
    <reaction evidence="1">
        <text>3-deoxy-alpha-D-manno-oct-2-ulosonate + CTP = CMP-3-deoxy-beta-D-manno-octulosonate + diphosphate</text>
        <dbReference type="Rhea" id="RHEA:23448"/>
        <dbReference type="ChEBI" id="CHEBI:33019"/>
        <dbReference type="ChEBI" id="CHEBI:37563"/>
        <dbReference type="ChEBI" id="CHEBI:85986"/>
        <dbReference type="ChEBI" id="CHEBI:85987"/>
        <dbReference type="EC" id="2.7.7.38"/>
    </reaction>
</comment>
<comment type="pathway">
    <text evidence="1">Nucleotide-sugar biosynthesis; CMP-3-deoxy-D-manno-octulosonate biosynthesis; CMP-3-deoxy-D-manno-octulosonate from 3-deoxy-D-manno-octulosonate and CTP: step 1/1.</text>
</comment>
<comment type="pathway">
    <text evidence="1">Bacterial outer membrane biogenesis; lipopolysaccharide biosynthesis.</text>
</comment>
<comment type="subcellular location">
    <subcellularLocation>
        <location evidence="1">Cytoplasm</location>
    </subcellularLocation>
</comment>
<comment type="similarity">
    <text evidence="1">Belongs to the KdsB family.</text>
</comment>
<proteinExistence type="inferred from homology"/>
<accession>Q92SX6</accession>
<keyword id="KW-0963">Cytoplasm</keyword>
<keyword id="KW-0448">Lipopolysaccharide biosynthesis</keyword>
<keyword id="KW-0548">Nucleotidyltransferase</keyword>
<keyword id="KW-1185">Reference proteome</keyword>
<keyword id="KW-0808">Transferase</keyword>